<keyword id="KW-0028">Amino-acid biosynthesis</keyword>
<keyword id="KW-0963">Cytoplasm</keyword>
<keyword id="KW-0521">NADP</keyword>
<keyword id="KW-0560">Oxidoreductase</keyword>
<keyword id="KW-0641">Proline biosynthesis</keyword>
<organism>
    <name type="scientific">Hydrogenovibrio crunogenus (strain DSM 25203 / XCL-2)</name>
    <name type="common">Thiomicrospira crunogena</name>
    <dbReference type="NCBI Taxonomy" id="317025"/>
    <lineage>
        <taxon>Bacteria</taxon>
        <taxon>Pseudomonadati</taxon>
        <taxon>Pseudomonadota</taxon>
        <taxon>Gammaproteobacteria</taxon>
        <taxon>Thiotrichales</taxon>
        <taxon>Piscirickettsiaceae</taxon>
        <taxon>Hydrogenovibrio</taxon>
    </lineage>
</organism>
<accession>Q31IE5</accession>
<dbReference type="EC" id="1.2.1.41" evidence="1"/>
<dbReference type="EMBL" id="CP000109">
    <property type="protein sequence ID" value="ABB41078.1"/>
    <property type="status" value="ALT_INIT"/>
    <property type="molecule type" value="Genomic_DNA"/>
</dbReference>
<dbReference type="SMR" id="Q31IE5"/>
<dbReference type="STRING" id="317025.Tcr_0482"/>
<dbReference type="KEGG" id="tcx:Tcr_0482"/>
<dbReference type="eggNOG" id="COG0014">
    <property type="taxonomic scope" value="Bacteria"/>
</dbReference>
<dbReference type="HOGENOM" id="CLU_030231_0_0_6"/>
<dbReference type="OrthoDB" id="9809970at2"/>
<dbReference type="UniPathway" id="UPA00098">
    <property type="reaction ID" value="UER00360"/>
</dbReference>
<dbReference type="GO" id="GO:0005737">
    <property type="term" value="C:cytoplasm"/>
    <property type="evidence" value="ECO:0007669"/>
    <property type="project" value="UniProtKB-SubCell"/>
</dbReference>
<dbReference type="GO" id="GO:0004350">
    <property type="term" value="F:glutamate-5-semialdehyde dehydrogenase activity"/>
    <property type="evidence" value="ECO:0007669"/>
    <property type="project" value="UniProtKB-UniRule"/>
</dbReference>
<dbReference type="GO" id="GO:0050661">
    <property type="term" value="F:NADP binding"/>
    <property type="evidence" value="ECO:0007669"/>
    <property type="project" value="InterPro"/>
</dbReference>
<dbReference type="GO" id="GO:0055129">
    <property type="term" value="P:L-proline biosynthetic process"/>
    <property type="evidence" value="ECO:0007669"/>
    <property type="project" value="UniProtKB-UniRule"/>
</dbReference>
<dbReference type="CDD" id="cd07079">
    <property type="entry name" value="ALDH_F18-19_ProA-GPR"/>
    <property type="match status" value="1"/>
</dbReference>
<dbReference type="FunFam" id="3.40.309.10:FF:000006">
    <property type="entry name" value="Gamma-glutamyl phosphate reductase"/>
    <property type="match status" value="1"/>
</dbReference>
<dbReference type="Gene3D" id="3.40.605.10">
    <property type="entry name" value="Aldehyde Dehydrogenase, Chain A, domain 1"/>
    <property type="match status" value="1"/>
</dbReference>
<dbReference type="Gene3D" id="3.40.309.10">
    <property type="entry name" value="Aldehyde Dehydrogenase, Chain A, domain 2"/>
    <property type="match status" value="1"/>
</dbReference>
<dbReference type="HAMAP" id="MF_00412">
    <property type="entry name" value="ProA"/>
    <property type="match status" value="1"/>
</dbReference>
<dbReference type="InterPro" id="IPR016161">
    <property type="entry name" value="Ald_DH/histidinol_DH"/>
</dbReference>
<dbReference type="InterPro" id="IPR016163">
    <property type="entry name" value="Ald_DH_C"/>
</dbReference>
<dbReference type="InterPro" id="IPR016162">
    <property type="entry name" value="Ald_DH_N"/>
</dbReference>
<dbReference type="InterPro" id="IPR015590">
    <property type="entry name" value="Aldehyde_DH_dom"/>
</dbReference>
<dbReference type="InterPro" id="IPR020593">
    <property type="entry name" value="G-glutamylP_reductase_CS"/>
</dbReference>
<dbReference type="InterPro" id="IPR012134">
    <property type="entry name" value="Glu-5-SA_DH"/>
</dbReference>
<dbReference type="InterPro" id="IPR000965">
    <property type="entry name" value="GPR_dom"/>
</dbReference>
<dbReference type="NCBIfam" id="NF001221">
    <property type="entry name" value="PRK00197.1"/>
    <property type="match status" value="1"/>
</dbReference>
<dbReference type="NCBIfam" id="TIGR00407">
    <property type="entry name" value="proA"/>
    <property type="match status" value="1"/>
</dbReference>
<dbReference type="PANTHER" id="PTHR11063:SF8">
    <property type="entry name" value="DELTA-1-PYRROLINE-5-CARBOXYLATE SYNTHASE"/>
    <property type="match status" value="1"/>
</dbReference>
<dbReference type="PANTHER" id="PTHR11063">
    <property type="entry name" value="GLUTAMATE SEMIALDEHYDE DEHYDROGENASE"/>
    <property type="match status" value="1"/>
</dbReference>
<dbReference type="Pfam" id="PF00171">
    <property type="entry name" value="Aldedh"/>
    <property type="match status" value="2"/>
</dbReference>
<dbReference type="PIRSF" id="PIRSF000151">
    <property type="entry name" value="GPR"/>
    <property type="match status" value="1"/>
</dbReference>
<dbReference type="SUPFAM" id="SSF53720">
    <property type="entry name" value="ALDH-like"/>
    <property type="match status" value="1"/>
</dbReference>
<dbReference type="PROSITE" id="PS01223">
    <property type="entry name" value="PROA"/>
    <property type="match status" value="1"/>
</dbReference>
<reference key="1">
    <citation type="journal article" date="2006" name="PLoS Biol.">
        <title>The genome of deep-sea vent chemolithoautotroph Thiomicrospira crunogena XCL-2.</title>
        <authorList>
            <person name="Scott K.M."/>
            <person name="Sievert S.M."/>
            <person name="Abril F.N."/>
            <person name="Ball L.A."/>
            <person name="Barrett C.J."/>
            <person name="Blake R.A."/>
            <person name="Boller A.J."/>
            <person name="Chain P.S.G."/>
            <person name="Clark J.A."/>
            <person name="Davis C.R."/>
            <person name="Detter C."/>
            <person name="Do K.F."/>
            <person name="Dobrinski K.P."/>
            <person name="Faza B.I."/>
            <person name="Fitzpatrick K.A."/>
            <person name="Freyermuth S.K."/>
            <person name="Harmer T.L."/>
            <person name="Hauser L.J."/>
            <person name="Huegler M."/>
            <person name="Kerfeld C.A."/>
            <person name="Klotz M.G."/>
            <person name="Kong W.W."/>
            <person name="Land M."/>
            <person name="Lapidus A."/>
            <person name="Larimer F.W."/>
            <person name="Longo D.L."/>
            <person name="Lucas S."/>
            <person name="Malfatti S.A."/>
            <person name="Massey S.E."/>
            <person name="Martin D.D."/>
            <person name="McCuddin Z."/>
            <person name="Meyer F."/>
            <person name="Moore J.L."/>
            <person name="Ocampo L.H. Jr."/>
            <person name="Paul J.H."/>
            <person name="Paulsen I.T."/>
            <person name="Reep D.K."/>
            <person name="Ren Q."/>
            <person name="Ross R.L."/>
            <person name="Sato P.Y."/>
            <person name="Thomas P."/>
            <person name="Tinkham L.E."/>
            <person name="Zeruth G.T."/>
        </authorList>
    </citation>
    <scope>NUCLEOTIDE SEQUENCE [LARGE SCALE GENOMIC DNA]</scope>
    <source>
        <strain>DSM 25203 / XCL-2</strain>
    </source>
</reference>
<name>PROA_HYDCU</name>
<comment type="function">
    <text evidence="1">Catalyzes the NADPH-dependent reduction of L-glutamate 5-phosphate into L-glutamate 5-semialdehyde and phosphate. The product spontaneously undergoes cyclization to form 1-pyrroline-5-carboxylate.</text>
</comment>
<comment type="catalytic activity">
    <reaction evidence="1">
        <text>L-glutamate 5-semialdehyde + phosphate + NADP(+) = L-glutamyl 5-phosphate + NADPH + H(+)</text>
        <dbReference type="Rhea" id="RHEA:19541"/>
        <dbReference type="ChEBI" id="CHEBI:15378"/>
        <dbReference type="ChEBI" id="CHEBI:43474"/>
        <dbReference type="ChEBI" id="CHEBI:57783"/>
        <dbReference type="ChEBI" id="CHEBI:58066"/>
        <dbReference type="ChEBI" id="CHEBI:58274"/>
        <dbReference type="ChEBI" id="CHEBI:58349"/>
        <dbReference type="EC" id="1.2.1.41"/>
    </reaction>
</comment>
<comment type="pathway">
    <text evidence="1">Amino-acid biosynthesis; L-proline biosynthesis; L-glutamate 5-semialdehyde from L-glutamate: step 2/2.</text>
</comment>
<comment type="subcellular location">
    <subcellularLocation>
        <location evidence="1">Cytoplasm</location>
    </subcellularLocation>
</comment>
<comment type="similarity">
    <text evidence="1">Belongs to the gamma-glutamyl phosphate reductase family.</text>
</comment>
<comment type="sequence caution" evidence="2">
    <conflict type="erroneous initiation">
        <sequence resource="EMBL-CDS" id="ABB41078"/>
    </conflict>
</comment>
<sequence length="417" mass="44884">MDVKAYMQKLGQQAREASRQLMVATTRQKNTALLNIATALEEQAETLKTENAKDLEQGKANGLDAAMLDRLALTDKVINGMATGLRQIAALNDPIGEISDMNYLPSGIQVGKMRVPLGVVGIIYESRPNVTIDAAALCLKSGNAALLRGGSEAAYSNRALAKCIQSALHESGLLPTAVQVVETTDRAAVGEMIAMPEYVDVIIPRGGKGLIERISEGAKVPVIKHLDGICHVYIDDDADADKATRVAFNAKTHRYGVCNAMETLLIADSRAAEILPGLVELYEEKGVELRGCEQTRAICDMKAATEEDWATEYLAPILSIKVVDDVDEAIDHITQYSSGHTESIITENLTTSRQFLARVDSSSVMVNASTRFADGFEYGLGAEIGISTDKFHARGPVGLEGLTSQKYIVLGDGTIRE</sequence>
<evidence type="ECO:0000255" key="1">
    <source>
        <dbReference type="HAMAP-Rule" id="MF_00412"/>
    </source>
</evidence>
<evidence type="ECO:0000305" key="2"/>
<protein>
    <recommendedName>
        <fullName evidence="1">Gamma-glutamyl phosphate reductase</fullName>
        <shortName evidence="1">GPR</shortName>
        <ecNumber evidence="1">1.2.1.41</ecNumber>
    </recommendedName>
    <alternativeName>
        <fullName evidence="1">Glutamate-5-semialdehyde dehydrogenase</fullName>
    </alternativeName>
    <alternativeName>
        <fullName evidence="1">Glutamyl-gamma-semialdehyde dehydrogenase</fullName>
        <shortName evidence="1">GSA dehydrogenase</shortName>
    </alternativeName>
</protein>
<proteinExistence type="inferred from homology"/>
<gene>
    <name evidence="1" type="primary">proA</name>
    <name type="ordered locus">Tcr_0482</name>
</gene>
<feature type="chain" id="PRO_0000230029" description="Gamma-glutamyl phosphate reductase">
    <location>
        <begin position="1"/>
        <end position="417"/>
    </location>
</feature>